<protein>
    <recommendedName>
        <fullName evidence="1">Recombination-associated protein RdgC</fullName>
    </recommendedName>
</protein>
<feature type="chain" id="PRO_1000099070" description="Recombination-associated protein RdgC">
    <location>
        <begin position="1"/>
        <end position="303"/>
    </location>
</feature>
<evidence type="ECO:0000255" key="1">
    <source>
        <dbReference type="HAMAP-Rule" id="MF_00194"/>
    </source>
</evidence>
<accession>B5R5Y3</accession>
<comment type="function">
    <text evidence="1">May be involved in recombination.</text>
</comment>
<comment type="subcellular location">
    <subcellularLocation>
        <location evidence="1">Cytoplasm</location>
        <location evidence="1">Nucleoid</location>
    </subcellularLocation>
</comment>
<comment type="similarity">
    <text evidence="1">Belongs to the RdgC family.</text>
</comment>
<name>RDGC_SALG2</name>
<proteinExistence type="inferred from homology"/>
<keyword id="KW-0963">Cytoplasm</keyword>
<keyword id="KW-0233">DNA recombination</keyword>
<gene>
    <name evidence="1" type="primary">rdgC</name>
    <name type="ordered locus">SG0404</name>
</gene>
<reference key="1">
    <citation type="journal article" date="2008" name="Genome Res.">
        <title>Comparative genome analysis of Salmonella enteritidis PT4 and Salmonella gallinarum 287/91 provides insights into evolutionary and host adaptation pathways.</title>
        <authorList>
            <person name="Thomson N.R."/>
            <person name="Clayton D.J."/>
            <person name="Windhorst D."/>
            <person name="Vernikos G."/>
            <person name="Davidson S."/>
            <person name="Churcher C."/>
            <person name="Quail M.A."/>
            <person name="Stevens M."/>
            <person name="Jones M.A."/>
            <person name="Watson M."/>
            <person name="Barron A."/>
            <person name="Layton A."/>
            <person name="Pickard D."/>
            <person name="Kingsley R.A."/>
            <person name="Bignell A."/>
            <person name="Clark L."/>
            <person name="Harris B."/>
            <person name="Ormond D."/>
            <person name="Abdellah Z."/>
            <person name="Brooks K."/>
            <person name="Cherevach I."/>
            <person name="Chillingworth T."/>
            <person name="Woodward J."/>
            <person name="Norberczak H."/>
            <person name="Lord A."/>
            <person name="Arrowsmith C."/>
            <person name="Jagels K."/>
            <person name="Moule S."/>
            <person name="Mungall K."/>
            <person name="Saunders M."/>
            <person name="Whitehead S."/>
            <person name="Chabalgoity J.A."/>
            <person name="Maskell D."/>
            <person name="Humphreys T."/>
            <person name="Roberts M."/>
            <person name="Barrow P.A."/>
            <person name="Dougan G."/>
            <person name="Parkhill J."/>
        </authorList>
    </citation>
    <scope>NUCLEOTIDE SEQUENCE [LARGE SCALE GENOMIC DNA]</scope>
    <source>
        <strain>287/91 / NCTC 13346</strain>
    </source>
</reference>
<organism>
    <name type="scientific">Salmonella gallinarum (strain 287/91 / NCTC 13346)</name>
    <dbReference type="NCBI Taxonomy" id="550538"/>
    <lineage>
        <taxon>Bacteria</taxon>
        <taxon>Pseudomonadati</taxon>
        <taxon>Pseudomonadota</taxon>
        <taxon>Gammaproteobacteria</taxon>
        <taxon>Enterobacterales</taxon>
        <taxon>Enterobacteriaceae</taxon>
        <taxon>Salmonella</taxon>
    </lineage>
</organism>
<sequence>MLWFKNLMVYRLSRDITLRAEEMEKQLASMTFTPCGSQDMAKMGWVPPMGSHSDALTHTANGQIIICARKEEKILPSPVIKQALEAKIQKLEADQGRKLKKTEKDSLKDEVLHSLLPRAFSRFSQTMMWIDTVNGLIMVDCASAKKAEDTLALLRKSLGSLPVVPLALENPIELTLTEWVRSGTVAQGFQLLDEAELKAMLEDGGVIRAKKQDLVSDEIAVHIEAGKVVTKLALDWQQRIQFVMCDDGSIKRLKFCDELRDQNEDIDREDFAQRFDADFILMTGELAALIQSLVEGLGGEAQR</sequence>
<dbReference type="EMBL" id="AM933173">
    <property type="protein sequence ID" value="CAR36303.1"/>
    <property type="molecule type" value="Genomic_DNA"/>
</dbReference>
<dbReference type="RefSeq" id="WP_000964305.1">
    <property type="nucleotide sequence ID" value="NC_011274.1"/>
</dbReference>
<dbReference type="SMR" id="B5R5Y3"/>
<dbReference type="KEGG" id="seg:SG0404"/>
<dbReference type="HOGENOM" id="CLU_052038_1_1_6"/>
<dbReference type="Proteomes" id="UP000008321">
    <property type="component" value="Chromosome"/>
</dbReference>
<dbReference type="GO" id="GO:0043590">
    <property type="term" value="C:bacterial nucleoid"/>
    <property type="evidence" value="ECO:0007669"/>
    <property type="project" value="TreeGrafter"/>
</dbReference>
<dbReference type="GO" id="GO:0005737">
    <property type="term" value="C:cytoplasm"/>
    <property type="evidence" value="ECO:0007669"/>
    <property type="project" value="UniProtKB-UniRule"/>
</dbReference>
<dbReference type="GO" id="GO:0003690">
    <property type="term" value="F:double-stranded DNA binding"/>
    <property type="evidence" value="ECO:0007669"/>
    <property type="project" value="TreeGrafter"/>
</dbReference>
<dbReference type="GO" id="GO:0006310">
    <property type="term" value="P:DNA recombination"/>
    <property type="evidence" value="ECO:0007669"/>
    <property type="project" value="UniProtKB-UniRule"/>
</dbReference>
<dbReference type="GO" id="GO:0000018">
    <property type="term" value="P:regulation of DNA recombination"/>
    <property type="evidence" value="ECO:0007669"/>
    <property type="project" value="TreeGrafter"/>
</dbReference>
<dbReference type="HAMAP" id="MF_00194">
    <property type="entry name" value="RdgC"/>
    <property type="match status" value="1"/>
</dbReference>
<dbReference type="InterPro" id="IPR007476">
    <property type="entry name" value="RdgC"/>
</dbReference>
<dbReference type="NCBIfam" id="NF001460">
    <property type="entry name" value="PRK00321.1-1"/>
    <property type="match status" value="1"/>
</dbReference>
<dbReference type="NCBIfam" id="NF001462">
    <property type="entry name" value="PRK00321.1-3"/>
    <property type="match status" value="1"/>
</dbReference>
<dbReference type="NCBIfam" id="NF001464">
    <property type="entry name" value="PRK00321.1-5"/>
    <property type="match status" value="1"/>
</dbReference>
<dbReference type="PANTHER" id="PTHR38103">
    <property type="entry name" value="RECOMBINATION-ASSOCIATED PROTEIN RDGC"/>
    <property type="match status" value="1"/>
</dbReference>
<dbReference type="PANTHER" id="PTHR38103:SF1">
    <property type="entry name" value="RECOMBINATION-ASSOCIATED PROTEIN RDGC"/>
    <property type="match status" value="1"/>
</dbReference>
<dbReference type="Pfam" id="PF04381">
    <property type="entry name" value="RdgC"/>
    <property type="match status" value="1"/>
</dbReference>